<sequence>MDTELLKTFLEVSRTRHFGRAAESLYLTQSAVSFRIRQLENQLGANLFTRHRNNIRLTPAGERLVPYAEMLLNTWRLAKKEVIHSLQHTELSIGATASLWEAYLTPWLQQLYEQQEELRLEARIALRNSLVKQLHERQLDLLITTEPPKMDELACLLLGHFSLRLYSSFSLDLPKEDDTPNEHKNASEVPYIKLEWGADFHQQENRLLDSEQAPILTTTSAHLTRQLLETTGGCAFLPEHWQKEYPQLVIHPDIPPIVRPLYAVWLQNSDQQALIRQLLKTPMNNATQSVTRE</sequence>
<reference key="1">
    <citation type="journal article" date="2006" name="J. Bacteriol.">
        <title>Complete genome sequence of Yersinia pestis strains Antiqua and Nepal516: evidence of gene reduction in an emerging pathogen.</title>
        <authorList>
            <person name="Chain P.S.G."/>
            <person name="Hu P."/>
            <person name="Malfatti S.A."/>
            <person name="Radnedge L."/>
            <person name="Larimer F."/>
            <person name="Vergez L.M."/>
            <person name="Worsham P."/>
            <person name="Chu M.C."/>
            <person name="Andersen G.L."/>
        </authorList>
    </citation>
    <scope>NUCLEOTIDE SEQUENCE [LARGE SCALE GENOMIC DNA]</scope>
    <source>
        <strain>Nepal516</strain>
    </source>
</reference>
<reference key="2">
    <citation type="submission" date="2009-04" db="EMBL/GenBank/DDBJ databases">
        <title>Yersinia pestis Nepal516A whole genome shotgun sequencing project.</title>
        <authorList>
            <person name="Plunkett G. III"/>
            <person name="Anderson B.D."/>
            <person name="Baumler D.J."/>
            <person name="Burland V."/>
            <person name="Cabot E.L."/>
            <person name="Glasner J.D."/>
            <person name="Mau B."/>
            <person name="Neeno-Eckwall E."/>
            <person name="Perna N.T."/>
            <person name="Munk A.C."/>
            <person name="Tapia R."/>
            <person name="Green L.D."/>
            <person name="Rogers Y.C."/>
            <person name="Detter J.C."/>
            <person name="Bruce D.C."/>
            <person name="Brettin T.S."/>
        </authorList>
    </citation>
    <scope>NUCLEOTIDE SEQUENCE [LARGE SCALE GENOMIC DNA]</scope>
    <source>
        <strain>Nepal516</strain>
    </source>
</reference>
<dbReference type="EMBL" id="CP000305">
    <property type="protein sequence ID" value="ABG16396.1"/>
    <property type="molecule type" value="Genomic_DNA"/>
</dbReference>
<dbReference type="EMBL" id="ACNQ01000001">
    <property type="protein sequence ID" value="EEO78500.1"/>
    <property type="molecule type" value="Genomic_DNA"/>
</dbReference>
<dbReference type="RefSeq" id="WP_002212020.1">
    <property type="nucleotide sequence ID" value="NZ_ACNQ01000001.1"/>
</dbReference>
<dbReference type="SMR" id="Q1CNN4"/>
<dbReference type="GeneID" id="57974802"/>
<dbReference type="KEGG" id="ypn:YPN_0063"/>
<dbReference type="HOGENOM" id="CLU_039613_8_2_6"/>
<dbReference type="Proteomes" id="UP000008936">
    <property type="component" value="Chromosome"/>
</dbReference>
<dbReference type="GO" id="GO:0003677">
    <property type="term" value="F:DNA binding"/>
    <property type="evidence" value="ECO:0007669"/>
    <property type="project" value="UniProtKB-KW"/>
</dbReference>
<dbReference type="GO" id="GO:0003700">
    <property type="term" value="F:DNA-binding transcription factor activity"/>
    <property type="evidence" value="ECO:0007669"/>
    <property type="project" value="UniProtKB-UniRule"/>
</dbReference>
<dbReference type="GO" id="GO:0045892">
    <property type="term" value="P:negative regulation of DNA-templated transcription"/>
    <property type="evidence" value="ECO:0007669"/>
    <property type="project" value="UniProtKB-UniRule"/>
</dbReference>
<dbReference type="CDD" id="cd05466">
    <property type="entry name" value="PBP2_LTTR_substrate"/>
    <property type="match status" value="1"/>
</dbReference>
<dbReference type="FunFam" id="1.10.10.10:FF:000001">
    <property type="entry name" value="LysR family transcriptional regulator"/>
    <property type="match status" value="1"/>
</dbReference>
<dbReference type="Gene3D" id="3.40.190.10">
    <property type="entry name" value="Periplasmic binding protein-like II"/>
    <property type="match status" value="2"/>
</dbReference>
<dbReference type="Gene3D" id="1.10.10.10">
    <property type="entry name" value="Winged helix-like DNA-binding domain superfamily/Winged helix DNA-binding domain"/>
    <property type="match status" value="1"/>
</dbReference>
<dbReference type="HAMAP" id="MF_01233">
    <property type="entry name" value="HTH_type_HdfR"/>
    <property type="match status" value="1"/>
</dbReference>
<dbReference type="InterPro" id="IPR050176">
    <property type="entry name" value="LTTR"/>
</dbReference>
<dbReference type="InterPro" id="IPR005119">
    <property type="entry name" value="LysR_subst-bd"/>
</dbReference>
<dbReference type="InterPro" id="IPR020890">
    <property type="entry name" value="Tscrpt_reg_HTH_HdfR"/>
</dbReference>
<dbReference type="InterPro" id="IPR000847">
    <property type="entry name" value="Tscrpt_reg_HTH_LysR"/>
</dbReference>
<dbReference type="InterPro" id="IPR036388">
    <property type="entry name" value="WH-like_DNA-bd_sf"/>
</dbReference>
<dbReference type="InterPro" id="IPR036390">
    <property type="entry name" value="WH_DNA-bd_sf"/>
</dbReference>
<dbReference type="NCBIfam" id="NF002946">
    <property type="entry name" value="PRK03601.1"/>
    <property type="match status" value="1"/>
</dbReference>
<dbReference type="PANTHER" id="PTHR30579:SF8">
    <property type="entry name" value="HTH-TYPE TRANSCRIPTIONAL REGULATOR HDFR"/>
    <property type="match status" value="1"/>
</dbReference>
<dbReference type="PANTHER" id="PTHR30579">
    <property type="entry name" value="TRANSCRIPTIONAL REGULATOR"/>
    <property type="match status" value="1"/>
</dbReference>
<dbReference type="Pfam" id="PF00126">
    <property type="entry name" value="HTH_1"/>
    <property type="match status" value="1"/>
</dbReference>
<dbReference type="Pfam" id="PF03466">
    <property type="entry name" value="LysR_substrate"/>
    <property type="match status" value="1"/>
</dbReference>
<dbReference type="PRINTS" id="PR00039">
    <property type="entry name" value="HTHLYSR"/>
</dbReference>
<dbReference type="SUPFAM" id="SSF53850">
    <property type="entry name" value="Periplasmic binding protein-like II"/>
    <property type="match status" value="1"/>
</dbReference>
<dbReference type="SUPFAM" id="SSF46785">
    <property type="entry name" value="Winged helix' DNA-binding domain"/>
    <property type="match status" value="1"/>
</dbReference>
<dbReference type="PROSITE" id="PS50931">
    <property type="entry name" value="HTH_LYSR"/>
    <property type="match status" value="1"/>
</dbReference>
<feature type="chain" id="PRO_1000066904" description="HTH-type transcriptional regulator HdfR">
    <location>
        <begin position="1"/>
        <end position="293"/>
    </location>
</feature>
<feature type="domain" description="HTH lysR-type" evidence="1">
    <location>
        <begin position="1"/>
        <end position="58"/>
    </location>
</feature>
<feature type="DNA-binding region" description="H-T-H motif" evidence="1">
    <location>
        <begin position="18"/>
        <end position="37"/>
    </location>
</feature>
<organism>
    <name type="scientific">Yersinia pestis bv. Antiqua (strain Nepal516)</name>
    <dbReference type="NCBI Taxonomy" id="377628"/>
    <lineage>
        <taxon>Bacteria</taxon>
        <taxon>Pseudomonadati</taxon>
        <taxon>Pseudomonadota</taxon>
        <taxon>Gammaproteobacteria</taxon>
        <taxon>Enterobacterales</taxon>
        <taxon>Yersiniaceae</taxon>
        <taxon>Yersinia</taxon>
    </lineage>
</organism>
<keyword id="KW-0238">DNA-binding</keyword>
<keyword id="KW-0678">Repressor</keyword>
<keyword id="KW-0804">Transcription</keyword>
<keyword id="KW-0805">Transcription regulation</keyword>
<comment type="function">
    <text evidence="1">Negatively regulates the transcription of the flagellar master operon flhDC by binding to the upstream region of the operon.</text>
</comment>
<comment type="similarity">
    <text evidence="2">Belongs to the LysR transcriptional regulatory family.</text>
</comment>
<accession>Q1CNN4</accession>
<accession>D1Q0U6</accession>
<proteinExistence type="inferred from homology"/>
<protein>
    <recommendedName>
        <fullName evidence="1">HTH-type transcriptional regulator HdfR</fullName>
    </recommendedName>
    <alternativeName>
        <fullName evidence="1">H-NS-dependent flhDC regulator</fullName>
    </alternativeName>
</protein>
<evidence type="ECO:0000255" key="1">
    <source>
        <dbReference type="HAMAP-Rule" id="MF_01233"/>
    </source>
</evidence>
<evidence type="ECO:0000305" key="2"/>
<name>HDFR_YERPN</name>
<gene>
    <name evidence="1" type="primary">hdfR</name>
    <name type="ordered locus">YPN_0063</name>
    <name type="ORF">YP516_0012</name>
</gene>